<comment type="function">
    <text evidence="4">Cytochrome P450 monooxygenase; part of the gene cluster that mediates the biosynthesis of the phytotoxin stemphyloxin II (PubMed:31553484). The first step of the pathway is the synthesis of dehydroprobetaenone I by the polyketide synthase sthA and the enoyl reductase sthE via condensation of one acetyl-CoA starter unit with 7 malonyl-CoA units and 5 methylations (PubMed:31553484). The C-terminal reductase (R) domain of sthA catalyzes the reductive release of the polyketide chain (PubMed:31553484). Because sthA lacks a designated enoylreductase (ER) domain, the required activity is provided the enoyl reductase sthE (PubMed:31553484). The short-chain dehydrogenase/reductase sthC then catalyzes reduction of dehydroprobetaenone I to probetaenone I (PubMed:31553484). The cytochrome P450 monooxygenase sthF catalyzes successive epoxidation, oxidation (resulting from epoxide opening) and hydroxylation to install a tertiary alcohol in the decaline ring to yield betaenone C from dehydroprobetaenone I and betaenone B from probetaenone I (PubMed:31553484). The FAD-linked oxidoreductase sthB is responsible for the conversion of betaenone C to betaenone A via an intramolecular aldol reaction between C-1 and C-17 to form the bridged tricyclic system in betaenone A (PubMed:31553484). Finally, the cytochrome P450 monooxygenase sthD catalyzes the hydroxylation of C-15 to afford the final metabolite stemphyloxin II (PubMed:31553484).</text>
</comment>
<comment type="catalytic activity">
    <reaction evidence="4">
        <text>betaenone A + NADPH + O2 + H(+) = stemphyloxin II + NADP(+) + H2O</text>
        <dbReference type="Rhea" id="RHEA:61904"/>
        <dbReference type="ChEBI" id="CHEBI:15377"/>
        <dbReference type="ChEBI" id="CHEBI:15378"/>
        <dbReference type="ChEBI" id="CHEBI:15379"/>
        <dbReference type="ChEBI" id="CHEBI:57783"/>
        <dbReference type="ChEBI" id="CHEBI:58349"/>
        <dbReference type="ChEBI" id="CHEBI:145055"/>
        <dbReference type="ChEBI" id="CHEBI:145066"/>
    </reaction>
    <physiologicalReaction direction="left-to-right" evidence="4">
        <dbReference type="Rhea" id="RHEA:61905"/>
    </physiologicalReaction>
</comment>
<comment type="catalytic activity">
    <reaction evidence="4">
        <text>betaenone C + NADPH + O2 + H(+) = stemphyloxin I + NADP(+) + H2O</text>
        <dbReference type="Rhea" id="RHEA:62712"/>
        <dbReference type="ChEBI" id="CHEBI:15377"/>
        <dbReference type="ChEBI" id="CHEBI:15378"/>
        <dbReference type="ChEBI" id="CHEBI:15379"/>
        <dbReference type="ChEBI" id="CHEBI:57783"/>
        <dbReference type="ChEBI" id="CHEBI:58349"/>
        <dbReference type="ChEBI" id="CHEBI:145053"/>
        <dbReference type="ChEBI" id="CHEBI:145070"/>
    </reaction>
    <physiologicalReaction direction="left-to-right" evidence="4">
        <dbReference type="Rhea" id="RHEA:62713"/>
    </physiologicalReaction>
</comment>
<comment type="cofactor">
    <cofactor evidence="1">
        <name>heme</name>
        <dbReference type="ChEBI" id="CHEBI:30413"/>
    </cofactor>
</comment>
<comment type="pathway">
    <text evidence="4">Mycotoxin biosynthesis.</text>
</comment>
<comment type="subcellular location">
    <subcellularLocation>
        <location evidence="2">Membrane</location>
        <topology evidence="2">Single-pass membrane protein</topology>
    </subcellularLocation>
</comment>
<comment type="similarity">
    <text evidence="6">Belongs to the cytochrome P450 family.</text>
</comment>
<sequence length="475" mass="53121">MAAYFLLGLYGSTLVYRLIFHPLNRFPGPLAARISDLWLCTQLGGHDMHHLSERLSKRYGEFVRIGSSTLMLTHPKAVAAIYGPGSPCRKGTFYDLEQPNRGIATRDESLHAGRRRVWSRGFGDKALRTYEPRVAAYVHMLLGRLADARGKPVDMARLAEAFAFDTMGDLGLGADFGMLRQARTHEAVEQLVQGMTIMGRRLPMWLMRLLIDVAQALVPTAATTGFLGFCHHHLDRFMADPRRSERPSLMAPLLSHYEKQNIADRDLSILRNDCRFIIIAGSDTVAATLTFAFFYLAKHPGHVTRLREELFPLRAADGTFSHQRIFDAPHLNAVINETLRLHPPASTIPRVTPPQGLVVADTFIPGDMTVFSSQYALGRSEAIYSKASDFIPERWCSRPDLIKDGSAYAPFSIGHHSCLGRPLALMEMRLVLAETLSRFDIAFAPGFDANHFLQHVHDCMSWHIGKLGLTFTAIE</sequence>
<dbReference type="EC" id="1.-.-.-" evidence="7"/>
<dbReference type="EMBL" id="CH445335">
    <property type="protein sequence ID" value="EAT85329.1"/>
    <property type="molecule type" value="Genomic_DNA"/>
</dbReference>
<dbReference type="RefSeq" id="XP_001798190.1">
    <property type="nucleotide sequence ID" value="XM_001798138.1"/>
</dbReference>
<dbReference type="SMR" id="Q0UK51"/>
<dbReference type="STRING" id="321614.Q0UK51"/>
<dbReference type="GlyCosmos" id="Q0UK51">
    <property type="glycosylation" value="1 site, No reported glycans"/>
</dbReference>
<dbReference type="GeneID" id="5975083"/>
<dbReference type="KEGG" id="pno:SNOG_07863"/>
<dbReference type="VEuPathDB" id="FungiDB:JI435_078630"/>
<dbReference type="InParanoid" id="Q0UK51"/>
<dbReference type="OMA" id="IRKWIYL"/>
<dbReference type="OrthoDB" id="6692864at2759"/>
<dbReference type="Proteomes" id="UP000001055">
    <property type="component" value="Unassembled WGS sequence"/>
</dbReference>
<dbReference type="GO" id="GO:0016020">
    <property type="term" value="C:membrane"/>
    <property type="evidence" value="ECO:0007669"/>
    <property type="project" value="UniProtKB-SubCell"/>
</dbReference>
<dbReference type="GO" id="GO:0020037">
    <property type="term" value="F:heme binding"/>
    <property type="evidence" value="ECO:0007669"/>
    <property type="project" value="InterPro"/>
</dbReference>
<dbReference type="GO" id="GO:0005506">
    <property type="term" value="F:iron ion binding"/>
    <property type="evidence" value="ECO:0007669"/>
    <property type="project" value="InterPro"/>
</dbReference>
<dbReference type="GO" id="GO:0004497">
    <property type="term" value="F:monooxygenase activity"/>
    <property type="evidence" value="ECO:0007669"/>
    <property type="project" value="UniProtKB-KW"/>
</dbReference>
<dbReference type="GO" id="GO:0016705">
    <property type="term" value="F:oxidoreductase activity, acting on paired donors, with incorporation or reduction of molecular oxygen"/>
    <property type="evidence" value="ECO:0007669"/>
    <property type="project" value="InterPro"/>
</dbReference>
<dbReference type="CDD" id="cd11061">
    <property type="entry name" value="CYP67-like"/>
    <property type="match status" value="1"/>
</dbReference>
<dbReference type="FunFam" id="1.10.630.10:FF:000063">
    <property type="entry name" value="Cytochrome P450 monooxygenase"/>
    <property type="match status" value="1"/>
</dbReference>
<dbReference type="Gene3D" id="1.10.630.10">
    <property type="entry name" value="Cytochrome P450"/>
    <property type="match status" value="1"/>
</dbReference>
<dbReference type="InterPro" id="IPR001128">
    <property type="entry name" value="Cyt_P450"/>
</dbReference>
<dbReference type="InterPro" id="IPR017972">
    <property type="entry name" value="Cyt_P450_CS"/>
</dbReference>
<dbReference type="InterPro" id="IPR002401">
    <property type="entry name" value="Cyt_P450_E_grp-I"/>
</dbReference>
<dbReference type="InterPro" id="IPR036396">
    <property type="entry name" value="Cyt_P450_sf"/>
</dbReference>
<dbReference type="InterPro" id="IPR050121">
    <property type="entry name" value="Cytochrome_P450_monoxygenase"/>
</dbReference>
<dbReference type="PANTHER" id="PTHR24305">
    <property type="entry name" value="CYTOCHROME P450"/>
    <property type="match status" value="1"/>
</dbReference>
<dbReference type="PANTHER" id="PTHR24305:SF112">
    <property type="entry name" value="L-ORNITHINE-N5-MONOOXYGENASE (EUROFUNG)"/>
    <property type="match status" value="1"/>
</dbReference>
<dbReference type="Pfam" id="PF00067">
    <property type="entry name" value="p450"/>
    <property type="match status" value="1"/>
</dbReference>
<dbReference type="PRINTS" id="PR00463">
    <property type="entry name" value="EP450I"/>
</dbReference>
<dbReference type="PRINTS" id="PR00385">
    <property type="entry name" value="P450"/>
</dbReference>
<dbReference type="SUPFAM" id="SSF48264">
    <property type="entry name" value="Cytochrome P450"/>
    <property type="match status" value="1"/>
</dbReference>
<dbReference type="PROSITE" id="PS00086">
    <property type="entry name" value="CYTOCHROME_P450"/>
    <property type="match status" value="1"/>
</dbReference>
<keyword id="KW-0325">Glycoprotein</keyword>
<keyword id="KW-0349">Heme</keyword>
<keyword id="KW-0408">Iron</keyword>
<keyword id="KW-0472">Membrane</keyword>
<keyword id="KW-0479">Metal-binding</keyword>
<keyword id="KW-0503">Monooxygenase</keyword>
<keyword id="KW-0560">Oxidoreductase</keyword>
<keyword id="KW-0732">Signal</keyword>
<keyword id="KW-0812">Transmembrane</keyword>
<keyword id="KW-1133">Transmembrane helix</keyword>
<evidence type="ECO:0000250" key="1">
    <source>
        <dbReference type="UniProtKB" id="P04798"/>
    </source>
</evidence>
<evidence type="ECO:0000255" key="2"/>
<evidence type="ECO:0000255" key="3">
    <source>
        <dbReference type="PROSITE-ProRule" id="PRU00498"/>
    </source>
</evidence>
<evidence type="ECO:0000269" key="4">
    <source>
    </source>
</evidence>
<evidence type="ECO:0000303" key="5">
    <source>
    </source>
</evidence>
<evidence type="ECO:0000305" key="6"/>
<evidence type="ECO:0000305" key="7">
    <source>
    </source>
</evidence>
<feature type="signal peptide" evidence="2">
    <location>
        <begin position="1"/>
        <end position="17"/>
    </location>
</feature>
<feature type="chain" id="PRO_0000448650" description="Cytochrome P450 monooxygenase sthD">
    <location>
        <begin position="18"/>
        <end position="475"/>
    </location>
</feature>
<feature type="transmembrane region" description="Helical" evidence="2">
    <location>
        <begin position="276"/>
        <end position="296"/>
    </location>
</feature>
<feature type="binding site" description="axial binding residue" evidence="1">
    <location>
        <position position="418"/>
    </location>
    <ligand>
        <name>heme</name>
        <dbReference type="ChEBI" id="CHEBI:30413"/>
    </ligand>
    <ligandPart>
        <name>Fe</name>
        <dbReference type="ChEBI" id="CHEBI:18248"/>
    </ligandPart>
</feature>
<feature type="glycosylation site" description="N-linked (GlcNAc...) asparagine" evidence="3">
    <location>
        <position position="336"/>
    </location>
</feature>
<name>STHD_PHANO</name>
<gene>
    <name evidence="5" type="primary">sthD</name>
    <name type="ORF">SNOG_07863</name>
</gene>
<proteinExistence type="evidence at protein level"/>
<organism>
    <name type="scientific">Phaeosphaeria nodorum (strain SN15 / ATCC MYA-4574 / FGSC 10173)</name>
    <name type="common">Glume blotch fungus</name>
    <name type="synonym">Parastagonospora nodorum</name>
    <dbReference type="NCBI Taxonomy" id="321614"/>
    <lineage>
        <taxon>Eukaryota</taxon>
        <taxon>Fungi</taxon>
        <taxon>Dikarya</taxon>
        <taxon>Ascomycota</taxon>
        <taxon>Pezizomycotina</taxon>
        <taxon>Dothideomycetes</taxon>
        <taxon>Pleosporomycetidae</taxon>
        <taxon>Pleosporales</taxon>
        <taxon>Pleosporineae</taxon>
        <taxon>Phaeosphaeriaceae</taxon>
        <taxon>Parastagonospora</taxon>
    </lineage>
</organism>
<protein>
    <recommendedName>
        <fullName evidence="5">Cytochrome P450 monooxygenase sthD</fullName>
        <ecNumber evidence="7">1.-.-.-</ecNumber>
    </recommendedName>
    <alternativeName>
        <fullName evidence="5">Stemphyloxin II biosynthesis cluster protein D</fullName>
    </alternativeName>
</protein>
<reference key="1">
    <citation type="journal article" date="2007" name="Plant Cell">
        <title>Dothideomycete-plant interactions illuminated by genome sequencing and EST analysis of the wheat pathogen Stagonospora nodorum.</title>
        <authorList>
            <person name="Hane J.K."/>
            <person name="Lowe R.G.T."/>
            <person name="Solomon P.S."/>
            <person name="Tan K.-C."/>
            <person name="Schoch C.L."/>
            <person name="Spatafora J.W."/>
            <person name="Crous P.W."/>
            <person name="Kodira C.D."/>
            <person name="Birren B.W."/>
            <person name="Galagan J.E."/>
            <person name="Torriani S.F.F."/>
            <person name="McDonald B.A."/>
            <person name="Oliver R.P."/>
        </authorList>
    </citation>
    <scope>NUCLEOTIDE SEQUENCE [LARGE SCALE GENOMIC DNA]</scope>
    <source>
        <strain>SN15 / ATCC MYA-4574 / FGSC 10173</strain>
    </source>
</reference>
<reference key="2">
    <citation type="journal article" date="2019" name="Chemistry">
        <title>Biosynthesis of a Tricyclo[6.2.2.02,7]dodecane System by a Berberine Bridge Enzyme-like Intramolecular Aldolase.</title>
        <authorList>
            <person name="Li H."/>
            <person name="Hu J."/>
            <person name="Wei H."/>
            <person name="Solomon P.S."/>
            <person name="Stubbs K.A."/>
            <person name="Chooi Y.H."/>
        </authorList>
    </citation>
    <scope>FUNCTION</scope>
    <scope>CATALYTIC ACTIVITY</scope>
    <scope>PATHWAY</scope>
</reference>
<accession>Q0UK51</accession>